<organism>
    <name type="scientific">Ralstonia pickettii (strain 12J)</name>
    <dbReference type="NCBI Taxonomy" id="402626"/>
    <lineage>
        <taxon>Bacteria</taxon>
        <taxon>Pseudomonadati</taxon>
        <taxon>Pseudomonadota</taxon>
        <taxon>Betaproteobacteria</taxon>
        <taxon>Burkholderiales</taxon>
        <taxon>Burkholderiaceae</taxon>
        <taxon>Ralstonia</taxon>
    </lineage>
</organism>
<proteinExistence type="inferred from homology"/>
<name>FTSH_RALPJ</name>
<evidence type="ECO:0000255" key="1">
    <source>
        <dbReference type="HAMAP-Rule" id="MF_01458"/>
    </source>
</evidence>
<evidence type="ECO:0000256" key="2">
    <source>
        <dbReference type="SAM" id="MobiDB-lite"/>
    </source>
</evidence>
<comment type="function">
    <text evidence="1">Acts as a processive, ATP-dependent zinc metallopeptidase for both cytoplasmic and membrane proteins. Plays a role in the quality control of integral membrane proteins.</text>
</comment>
<comment type="cofactor">
    <cofactor evidence="1">
        <name>Zn(2+)</name>
        <dbReference type="ChEBI" id="CHEBI:29105"/>
    </cofactor>
    <text evidence="1">Binds 1 zinc ion per subunit.</text>
</comment>
<comment type="subunit">
    <text evidence="1">Homohexamer.</text>
</comment>
<comment type="subcellular location">
    <subcellularLocation>
        <location evidence="1">Cell inner membrane</location>
        <topology evidence="1">Multi-pass membrane protein</topology>
        <orientation evidence="1">Cytoplasmic side</orientation>
    </subcellularLocation>
</comment>
<comment type="similarity">
    <text evidence="1">In the central section; belongs to the AAA ATPase family.</text>
</comment>
<comment type="similarity">
    <text evidence="1">In the C-terminal section; belongs to the peptidase M41 family.</text>
</comment>
<gene>
    <name evidence="1" type="primary">ftsH</name>
    <name type="ordered locus">Rpic_1702</name>
</gene>
<keyword id="KW-0067">ATP-binding</keyword>
<keyword id="KW-0997">Cell inner membrane</keyword>
<keyword id="KW-1003">Cell membrane</keyword>
<keyword id="KW-0378">Hydrolase</keyword>
<keyword id="KW-0472">Membrane</keyword>
<keyword id="KW-0479">Metal-binding</keyword>
<keyword id="KW-0482">Metalloprotease</keyword>
<keyword id="KW-0547">Nucleotide-binding</keyword>
<keyword id="KW-0645">Protease</keyword>
<keyword id="KW-0812">Transmembrane</keyword>
<keyword id="KW-1133">Transmembrane helix</keyword>
<keyword id="KW-0862">Zinc</keyword>
<feature type="chain" id="PRO_0000400381" description="ATP-dependent zinc metalloprotease FtsH">
    <location>
        <begin position="1"/>
        <end position="714"/>
    </location>
</feature>
<feature type="topological domain" description="Cytoplasmic" evidence="1">
    <location>
        <begin position="1"/>
        <end position="75"/>
    </location>
</feature>
<feature type="transmembrane region" description="Helical" evidence="1">
    <location>
        <begin position="76"/>
        <end position="96"/>
    </location>
</feature>
<feature type="topological domain" description="Periplasmic" evidence="1">
    <location>
        <begin position="97"/>
        <end position="188"/>
    </location>
</feature>
<feature type="transmembrane region" description="Helical" evidence="1">
    <location>
        <begin position="189"/>
        <end position="209"/>
    </location>
</feature>
<feature type="topological domain" description="Cytoplasmic" evidence="1">
    <location>
        <begin position="210"/>
        <end position="714"/>
    </location>
</feature>
<feature type="region of interest" description="Disordered" evidence="2">
    <location>
        <begin position="688"/>
        <end position="714"/>
    </location>
</feature>
<feature type="compositionally biased region" description="Polar residues" evidence="2">
    <location>
        <begin position="699"/>
        <end position="714"/>
    </location>
</feature>
<feature type="active site" evidence="1">
    <location>
        <position position="503"/>
    </location>
</feature>
<feature type="binding site" evidence="1">
    <location>
        <begin position="280"/>
        <end position="287"/>
    </location>
    <ligand>
        <name>ATP</name>
        <dbReference type="ChEBI" id="CHEBI:30616"/>
    </ligand>
</feature>
<feature type="binding site" evidence="1">
    <location>
        <position position="502"/>
    </location>
    <ligand>
        <name>Zn(2+)</name>
        <dbReference type="ChEBI" id="CHEBI:29105"/>
        <note>catalytic</note>
    </ligand>
</feature>
<feature type="binding site" evidence="1">
    <location>
        <position position="506"/>
    </location>
    <ligand>
        <name>Zn(2+)</name>
        <dbReference type="ChEBI" id="CHEBI:29105"/>
        <note>catalytic</note>
    </ligand>
</feature>
<feature type="binding site" evidence="1">
    <location>
        <position position="579"/>
    </location>
    <ligand>
        <name>Zn(2+)</name>
        <dbReference type="ChEBI" id="CHEBI:29105"/>
        <note>catalytic</note>
    </ligand>
</feature>
<reference key="1">
    <citation type="submission" date="2008-05" db="EMBL/GenBank/DDBJ databases">
        <title>Complete sequence of chromosome 1 of Ralstonia pickettii 12J.</title>
        <authorList>
            <person name="Lucas S."/>
            <person name="Copeland A."/>
            <person name="Lapidus A."/>
            <person name="Glavina del Rio T."/>
            <person name="Dalin E."/>
            <person name="Tice H."/>
            <person name="Bruce D."/>
            <person name="Goodwin L."/>
            <person name="Pitluck S."/>
            <person name="Meincke L."/>
            <person name="Brettin T."/>
            <person name="Detter J.C."/>
            <person name="Han C."/>
            <person name="Kuske C.R."/>
            <person name="Schmutz J."/>
            <person name="Larimer F."/>
            <person name="Land M."/>
            <person name="Hauser L."/>
            <person name="Kyrpides N."/>
            <person name="Mikhailova N."/>
            <person name="Marsh T."/>
            <person name="Richardson P."/>
        </authorList>
    </citation>
    <scope>NUCLEOTIDE SEQUENCE [LARGE SCALE GENOMIC DNA]</scope>
    <source>
        <strain>12J</strain>
    </source>
</reference>
<protein>
    <recommendedName>
        <fullName evidence="1">ATP-dependent zinc metalloprotease FtsH</fullName>
        <ecNumber evidence="1">3.4.24.-</ecNumber>
    </recommendedName>
</protein>
<sequence>MEKPRRLRPRARPQCRGLMKVNLGDFQASILGTHTNARLSGAYPGRPPTFPALETRLTFNKVDLEKNPMEPRQQQFSLWYVLVTILAMLAIQTLFVSGHVETIPYSDFKVLLKAGKLKDVAIGEQAISGTFSTEGIDNLLAKQQIEEIRREAKGDHAFSTLRVADPELVQELEAAKVRFVGQPDNKWLSTILSWVVPAVIFFGIWSFLIKRVGGAAGSMMEIGKSKAKVYMQKETGVTFADVAGIDEAKEELSEIVSFLKDPQRYQRLGGKIPKGVLLVGAPGTGKTLLAKAVAGEAGVPFFSMSGSDFVEMFVGVGAARVRDLFKQAETKAPCIIFIDELDALGKTRALNAVGGNEEREQTLNQLLVEMDGFDSNKGVIIMAATNRPEILDPALLRPGRFDRHVALDRPDLKGREQILKVHVKGVVLAPEVDLTKLAGRTPGFAGADLANLVNEAALLAARKSKQMVEMADFDEALDRIVGGLEKKNRVMNPKEKETIAFHEAGHAIVAEHRPLADRVSKVSIIPRGVAALGYTQQTPTEDRYLLKRSELLDRLDVLLGGRIAEQLIFGDVSTGAQNDLQRATDMARQMITQFGMSDQLGLATYENMPNPLFAGTGLMQRERNEYSESTAQMIDAEVRKLLAEASHRVQATLEGQRTKLDALAQLLLEKEVVDRQDLDMFLSAKVTPMPPPKPVANIEESTATGKPDQKTQGT</sequence>
<dbReference type="EC" id="3.4.24.-" evidence="1"/>
<dbReference type="EMBL" id="CP001068">
    <property type="protein sequence ID" value="ACD26840.1"/>
    <property type="molecule type" value="Genomic_DNA"/>
</dbReference>
<dbReference type="SMR" id="B2UE66"/>
<dbReference type="STRING" id="402626.Rpic_1702"/>
<dbReference type="KEGG" id="rpi:Rpic_1702"/>
<dbReference type="eggNOG" id="COG0465">
    <property type="taxonomic scope" value="Bacteria"/>
</dbReference>
<dbReference type="HOGENOM" id="CLU_000688_16_2_4"/>
<dbReference type="GO" id="GO:0005886">
    <property type="term" value="C:plasma membrane"/>
    <property type="evidence" value="ECO:0007669"/>
    <property type="project" value="UniProtKB-SubCell"/>
</dbReference>
<dbReference type="GO" id="GO:0005524">
    <property type="term" value="F:ATP binding"/>
    <property type="evidence" value="ECO:0007669"/>
    <property type="project" value="UniProtKB-UniRule"/>
</dbReference>
<dbReference type="GO" id="GO:0016887">
    <property type="term" value="F:ATP hydrolysis activity"/>
    <property type="evidence" value="ECO:0007669"/>
    <property type="project" value="UniProtKB-UniRule"/>
</dbReference>
<dbReference type="GO" id="GO:0004176">
    <property type="term" value="F:ATP-dependent peptidase activity"/>
    <property type="evidence" value="ECO:0007669"/>
    <property type="project" value="InterPro"/>
</dbReference>
<dbReference type="GO" id="GO:0004222">
    <property type="term" value="F:metalloendopeptidase activity"/>
    <property type="evidence" value="ECO:0007669"/>
    <property type="project" value="InterPro"/>
</dbReference>
<dbReference type="GO" id="GO:0008270">
    <property type="term" value="F:zinc ion binding"/>
    <property type="evidence" value="ECO:0007669"/>
    <property type="project" value="UniProtKB-UniRule"/>
</dbReference>
<dbReference type="GO" id="GO:0030163">
    <property type="term" value="P:protein catabolic process"/>
    <property type="evidence" value="ECO:0007669"/>
    <property type="project" value="UniProtKB-UniRule"/>
</dbReference>
<dbReference type="GO" id="GO:0006508">
    <property type="term" value="P:proteolysis"/>
    <property type="evidence" value="ECO:0007669"/>
    <property type="project" value="UniProtKB-KW"/>
</dbReference>
<dbReference type="CDD" id="cd19501">
    <property type="entry name" value="RecA-like_FtsH"/>
    <property type="match status" value="1"/>
</dbReference>
<dbReference type="FunFam" id="1.10.8.60:FF:000001">
    <property type="entry name" value="ATP-dependent zinc metalloprotease FtsH"/>
    <property type="match status" value="1"/>
</dbReference>
<dbReference type="FunFam" id="1.20.58.760:FF:000001">
    <property type="entry name" value="ATP-dependent zinc metalloprotease FtsH"/>
    <property type="match status" value="1"/>
</dbReference>
<dbReference type="FunFam" id="3.40.50.300:FF:000001">
    <property type="entry name" value="ATP-dependent zinc metalloprotease FtsH"/>
    <property type="match status" value="1"/>
</dbReference>
<dbReference type="Gene3D" id="1.10.8.60">
    <property type="match status" value="1"/>
</dbReference>
<dbReference type="Gene3D" id="3.30.720.210">
    <property type="match status" value="1"/>
</dbReference>
<dbReference type="Gene3D" id="3.40.50.300">
    <property type="entry name" value="P-loop containing nucleotide triphosphate hydrolases"/>
    <property type="match status" value="1"/>
</dbReference>
<dbReference type="Gene3D" id="1.20.58.760">
    <property type="entry name" value="Peptidase M41"/>
    <property type="match status" value="1"/>
</dbReference>
<dbReference type="HAMAP" id="MF_01458">
    <property type="entry name" value="FtsH"/>
    <property type="match status" value="1"/>
</dbReference>
<dbReference type="InterPro" id="IPR003593">
    <property type="entry name" value="AAA+_ATPase"/>
</dbReference>
<dbReference type="InterPro" id="IPR041569">
    <property type="entry name" value="AAA_lid_3"/>
</dbReference>
<dbReference type="InterPro" id="IPR003959">
    <property type="entry name" value="ATPase_AAA_core"/>
</dbReference>
<dbReference type="InterPro" id="IPR003960">
    <property type="entry name" value="ATPase_AAA_CS"/>
</dbReference>
<dbReference type="InterPro" id="IPR005936">
    <property type="entry name" value="FtsH"/>
</dbReference>
<dbReference type="InterPro" id="IPR027417">
    <property type="entry name" value="P-loop_NTPase"/>
</dbReference>
<dbReference type="InterPro" id="IPR011546">
    <property type="entry name" value="Pept_M41_FtsH_extracell"/>
</dbReference>
<dbReference type="InterPro" id="IPR000642">
    <property type="entry name" value="Peptidase_M41"/>
</dbReference>
<dbReference type="InterPro" id="IPR037219">
    <property type="entry name" value="Peptidase_M41-like"/>
</dbReference>
<dbReference type="NCBIfam" id="TIGR01241">
    <property type="entry name" value="FtsH_fam"/>
    <property type="match status" value="1"/>
</dbReference>
<dbReference type="PANTHER" id="PTHR23076:SF113">
    <property type="entry name" value="ATP-DEPENDENT ZINC METALLOPROTEASE FTSH 1, CHLOROPLASTIC-RELATED"/>
    <property type="match status" value="1"/>
</dbReference>
<dbReference type="PANTHER" id="PTHR23076">
    <property type="entry name" value="METALLOPROTEASE M41 FTSH"/>
    <property type="match status" value="1"/>
</dbReference>
<dbReference type="Pfam" id="PF00004">
    <property type="entry name" value="AAA"/>
    <property type="match status" value="1"/>
</dbReference>
<dbReference type="Pfam" id="PF17862">
    <property type="entry name" value="AAA_lid_3"/>
    <property type="match status" value="1"/>
</dbReference>
<dbReference type="Pfam" id="PF06480">
    <property type="entry name" value="FtsH_ext"/>
    <property type="match status" value="1"/>
</dbReference>
<dbReference type="Pfam" id="PF01434">
    <property type="entry name" value="Peptidase_M41"/>
    <property type="match status" value="1"/>
</dbReference>
<dbReference type="SMART" id="SM00382">
    <property type="entry name" value="AAA"/>
    <property type="match status" value="1"/>
</dbReference>
<dbReference type="SUPFAM" id="SSF140990">
    <property type="entry name" value="FtsH protease domain-like"/>
    <property type="match status" value="1"/>
</dbReference>
<dbReference type="SUPFAM" id="SSF52540">
    <property type="entry name" value="P-loop containing nucleoside triphosphate hydrolases"/>
    <property type="match status" value="1"/>
</dbReference>
<dbReference type="PROSITE" id="PS00674">
    <property type="entry name" value="AAA"/>
    <property type="match status" value="1"/>
</dbReference>
<accession>B2UE66</accession>